<comment type="function">
    <text evidence="1">Produces ATP from ADP in the presence of a proton gradient across the membrane.</text>
</comment>
<comment type="subunit">
    <text evidence="1">F-type ATPases have 2 components, CF(1) - the catalytic core - and CF(0) - the membrane proton channel. CF(1) has five subunits: alpha(3), beta(3), gamma(1), delta(1), epsilon(1). CF(0) has three main subunits: a, b and c.</text>
</comment>
<comment type="subcellular location">
    <subcellularLocation>
        <location evidence="1">Cell inner membrane</location>
        <topology evidence="1">Peripheral membrane protein</topology>
    </subcellularLocation>
</comment>
<comment type="similarity">
    <text evidence="1">Belongs to the ATPase epsilon chain family.</text>
</comment>
<dbReference type="EMBL" id="CP000503">
    <property type="protein sequence ID" value="ABM26854.1"/>
    <property type="molecule type" value="Genomic_DNA"/>
</dbReference>
<dbReference type="RefSeq" id="WP_011791275.1">
    <property type="nucleotide sequence ID" value="NC_008750.1"/>
</dbReference>
<dbReference type="SMR" id="A1RQA9"/>
<dbReference type="KEGG" id="shw:Sputw3181_4052"/>
<dbReference type="HOGENOM" id="CLU_084338_2_0_6"/>
<dbReference type="Proteomes" id="UP000002597">
    <property type="component" value="Chromosome"/>
</dbReference>
<dbReference type="GO" id="GO:0005886">
    <property type="term" value="C:plasma membrane"/>
    <property type="evidence" value="ECO:0007669"/>
    <property type="project" value="UniProtKB-SubCell"/>
</dbReference>
<dbReference type="GO" id="GO:0045259">
    <property type="term" value="C:proton-transporting ATP synthase complex"/>
    <property type="evidence" value="ECO:0007669"/>
    <property type="project" value="UniProtKB-KW"/>
</dbReference>
<dbReference type="GO" id="GO:0005524">
    <property type="term" value="F:ATP binding"/>
    <property type="evidence" value="ECO:0007669"/>
    <property type="project" value="UniProtKB-UniRule"/>
</dbReference>
<dbReference type="GO" id="GO:0046933">
    <property type="term" value="F:proton-transporting ATP synthase activity, rotational mechanism"/>
    <property type="evidence" value="ECO:0007669"/>
    <property type="project" value="UniProtKB-UniRule"/>
</dbReference>
<dbReference type="CDD" id="cd12152">
    <property type="entry name" value="F1-ATPase_delta"/>
    <property type="match status" value="1"/>
</dbReference>
<dbReference type="FunFam" id="1.20.5.440:FF:000001">
    <property type="entry name" value="ATP synthase epsilon chain"/>
    <property type="match status" value="1"/>
</dbReference>
<dbReference type="FunFam" id="2.60.15.10:FF:000001">
    <property type="entry name" value="ATP synthase epsilon chain"/>
    <property type="match status" value="1"/>
</dbReference>
<dbReference type="Gene3D" id="1.20.5.440">
    <property type="entry name" value="ATP synthase delta/epsilon subunit, C-terminal domain"/>
    <property type="match status" value="1"/>
</dbReference>
<dbReference type="Gene3D" id="2.60.15.10">
    <property type="entry name" value="F0F1 ATP synthase delta/epsilon subunit, N-terminal"/>
    <property type="match status" value="1"/>
</dbReference>
<dbReference type="HAMAP" id="MF_00530">
    <property type="entry name" value="ATP_synth_epsil_bac"/>
    <property type="match status" value="1"/>
</dbReference>
<dbReference type="InterPro" id="IPR036794">
    <property type="entry name" value="ATP_F1_dsu/esu_C_sf"/>
</dbReference>
<dbReference type="InterPro" id="IPR001469">
    <property type="entry name" value="ATP_synth_F1_dsu/esu"/>
</dbReference>
<dbReference type="InterPro" id="IPR020546">
    <property type="entry name" value="ATP_synth_F1_dsu/esu_N"/>
</dbReference>
<dbReference type="InterPro" id="IPR020547">
    <property type="entry name" value="ATP_synth_F1_esu_C"/>
</dbReference>
<dbReference type="InterPro" id="IPR036771">
    <property type="entry name" value="ATPsynth_dsu/esu_N"/>
</dbReference>
<dbReference type="NCBIfam" id="TIGR01216">
    <property type="entry name" value="ATP_synt_epsi"/>
    <property type="match status" value="1"/>
</dbReference>
<dbReference type="NCBIfam" id="NF001847">
    <property type="entry name" value="PRK00571.1-4"/>
    <property type="match status" value="1"/>
</dbReference>
<dbReference type="PANTHER" id="PTHR13822">
    <property type="entry name" value="ATP SYNTHASE DELTA/EPSILON CHAIN"/>
    <property type="match status" value="1"/>
</dbReference>
<dbReference type="PANTHER" id="PTHR13822:SF10">
    <property type="entry name" value="ATP SYNTHASE EPSILON CHAIN, CHLOROPLASTIC"/>
    <property type="match status" value="1"/>
</dbReference>
<dbReference type="Pfam" id="PF00401">
    <property type="entry name" value="ATP-synt_DE"/>
    <property type="match status" value="1"/>
</dbReference>
<dbReference type="Pfam" id="PF02823">
    <property type="entry name" value="ATP-synt_DE_N"/>
    <property type="match status" value="1"/>
</dbReference>
<dbReference type="SUPFAM" id="SSF46604">
    <property type="entry name" value="Epsilon subunit of F1F0-ATP synthase C-terminal domain"/>
    <property type="match status" value="1"/>
</dbReference>
<dbReference type="SUPFAM" id="SSF51344">
    <property type="entry name" value="Epsilon subunit of F1F0-ATP synthase N-terminal domain"/>
    <property type="match status" value="1"/>
</dbReference>
<protein>
    <recommendedName>
        <fullName evidence="1">ATP synthase epsilon chain</fullName>
    </recommendedName>
    <alternativeName>
        <fullName evidence="1">ATP synthase F1 sector epsilon subunit</fullName>
    </alternativeName>
    <alternativeName>
        <fullName evidence="1">F-ATPase epsilon subunit</fullName>
    </alternativeName>
</protein>
<proteinExistence type="inferred from homology"/>
<accession>A1RQA9</accession>
<gene>
    <name evidence="1" type="primary">atpC</name>
    <name type="ordered locus">Sputw3181_4052</name>
</gene>
<keyword id="KW-0066">ATP synthesis</keyword>
<keyword id="KW-0997">Cell inner membrane</keyword>
<keyword id="KW-1003">Cell membrane</keyword>
<keyword id="KW-0139">CF(1)</keyword>
<keyword id="KW-0375">Hydrogen ion transport</keyword>
<keyword id="KW-0406">Ion transport</keyword>
<keyword id="KW-0472">Membrane</keyword>
<keyword id="KW-0813">Transport</keyword>
<evidence type="ECO:0000255" key="1">
    <source>
        <dbReference type="HAMAP-Rule" id="MF_00530"/>
    </source>
</evidence>
<reference key="1">
    <citation type="submission" date="2006-12" db="EMBL/GenBank/DDBJ databases">
        <title>Complete sequence of Shewanella sp. W3-18-1.</title>
        <authorList>
            <consortium name="US DOE Joint Genome Institute"/>
            <person name="Copeland A."/>
            <person name="Lucas S."/>
            <person name="Lapidus A."/>
            <person name="Barry K."/>
            <person name="Detter J.C."/>
            <person name="Glavina del Rio T."/>
            <person name="Hammon N."/>
            <person name="Israni S."/>
            <person name="Dalin E."/>
            <person name="Tice H."/>
            <person name="Pitluck S."/>
            <person name="Chain P."/>
            <person name="Malfatti S."/>
            <person name="Shin M."/>
            <person name="Vergez L."/>
            <person name="Schmutz J."/>
            <person name="Larimer F."/>
            <person name="Land M."/>
            <person name="Hauser L."/>
            <person name="Kyrpides N."/>
            <person name="Lykidis A."/>
            <person name="Tiedje J."/>
            <person name="Richardson P."/>
        </authorList>
    </citation>
    <scope>NUCLEOTIDE SEQUENCE [LARGE SCALE GENOMIC DNA]</scope>
    <source>
        <strain>W3-18-1</strain>
    </source>
</reference>
<organism>
    <name type="scientific">Shewanella sp. (strain W3-18-1)</name>
    <dbReference type="NCBI Taxonomy" id="351745"/>
    <lineage>
        <taxon>Bacteria</taxon>
        <taxon>Pseudomonadati</taxon>
        <taxon>Pseudomonadota</taxon>
        <taxon>Gammaproteobacteria</taxon>
        <taxon>Alteromonadales</taxon>
        <taxon>Shewanellaceae</taxon>
        <taxon>Shewanella</taxon>
    </lineage>
</organism>
<feature type="chain" id="PRO_1000056535" description="ATP synthase epsilon chain">
    <location>
        <begin position="1"/>
        <end position="142"/>
    </location>
</feature>
<name>ATPE_SHESW</name>
<sequence length="142" mass="15204">MAAMTVHLDIVSAENSIFKGRVACLQVTGVEGELGILPGHAPLLTTIKPGMARIIKQDGSEEVIYLSGGFLEVQPNSIAVLADVVMRADEIDEQAALEAKRRAEAHMADAGADFDYDAAMVELAKAMAQLRVVETIKKNIAR</sequence>